<sequence>MATTTATTPPSLTDIRALKYTSSTVSVASPAEIEAITKTWAETFKIPNDVLPLACWDLARAFADVGASSKSELTGDSAALAGVSRKQLAQAIKIHCTIRQFCMYFANVVWNIMLDTKTPPASWSKLGYKEESKFAGFDFFDGVNHPAALMPADGLIRGPSEAELLAHQTAKQVALHRDAKRRGTNVVNSVEITNGRSDPIGPLITYPQ</sequence>
<comment type="function">
    <text>Required for genome encapsidation. Forms ribonucleoprotein complexes along with TGB1 helicase and viral RNA.</text>
</comment>
<comment type="subcellular location">
    <subcellularLocation>
        <location evidence="1">Virion</location>
    </subcellularLocation>
</comment>
<comment type="similarity">
    <text evidence="1">Belongs to the potexvirus capsid protein family.</text>
</comment>
<organismHost>
    <name type="scientific">Trifolium</name>
    <dbReference type="NCBI Taxonomy" id="3898"/>
</organismHost>
<feature type="chain" id="PRO_0000222633" description="Coat protein">
    <location>
        <begin position="1"/>
        <end position="208"/>
    </location>
</feature>
<proteinExistence type="inferred from homology"/>
<reference key="1">
    <citation type="journal article" date="1990" name="Virology">
        <title>Infectious transcripts and nucleotide sequence of cloned cDNA of the potexvirus white clover mosaic virus.</title>
        <authorList>
            <person name="Beck D.L."/>
            <person name="Forster R.L.S."/>
            <person name="Bevan M.W."/>
            <person name="Boxen K.A."/>
            <person name="Lowe S.C."/>
            <person name="Gardner R.C."/>
        </authorList>
    </citation>
    <scope>NUCLEOTIDE SEQUENCE [GENOMIC RNA]</scope>
</reference>
<reference key="2">
    <citation type="journal article" date="2005" name="Mol. Plant Microbe Interact.">
        <title>A new cell-to-cell transport model for Potexviruses.</title>
        <authorList>
            <person name="Verchot-Lubicz J."/>
        </authorList>
    </citation>
    <scope>REVIEW</scope>
</reference>
<keyword id="KW-0167">Capsid protein</keyword>
<keyword id="KW-1139">Helical capsid protein</keyword>
<keyword id="KW-0687">Ribonucleoprotein</keyword>
<keyword id="KW-0946">Virion</keyword>
<organism>
    <name type="scientific">White clover mosaic virus (strain O)</name>
    <name type="common">WCMV</name>
    <dbReference type="NCBI Taxonomy" id="12190"/>
    <lineage>
        <taxon>Viruses</taxon>
        <taxon>Riboviria</taxon>
        <taxon>Orthornavirae</taxon>
        <taxon>Kitrinoviricota</taxon>
        <taxon>Alsuviricetes</taxon>
        <taxon>Tymovirales</taxon>
        <taxon>Alphaflexiviridae</taxon>
        <taxon>Potexvirus</taxon>
        <taxon>White clover mosaic virus</taxon>
    </lineage>
</organism>
<accession>P15406</accession>
<name>CAPSD_WCMVO</name>
<evidence type="ECO:0000305" key="1"/>
<protein>
    <recommendedName>
        <fullName>Coat protein</fullName>
    </recommendedName>
    <alternativeName>
        <fullName>Capsid protein</fullName>
        <shortName>CP</shortName>
    </alternativeName>
</protein>
<dbReference type="EMBL" id="X16636">
    <property type="protein sequence ID" value="CAA34632.1"/>
    <property type="molecule type" value="Genomic_RNA"/>
</dbReference>
<dbReference type="PIR" id="S35114">
    <property type="entry name" value="E46350"/>
</dbReference>
<dbReference type="SMR" id="P15406"/>
<dbReference type="Proteomes" id="UP000007628">
    <property type="component" value="Genome"/>
</dbReference>
<dbReference type="GO" id="GO:0019029">
    <property type="term" value="C:helical viral capsid"/>
    <property type="evidence" value="ECO:0007669"/>
    <property type="project" value="UniProtKB-KW"/>
</dbReference>
<dbReference type="GO" id="GO:1990904">
    <property type="term" value="C:ribonucleoprotein complex"/>
    <property type="evidence" value="ECO:0007669"/>
    <property type="project" value="UniProtKB-KW"/>
</dbReference>
<dbReference type="GO" id="GO:0005198">
    <property type="term" value="F:structural molecule activity"/>
    <property type="evidence" value="ECO:0007669"/>
    <property type="project" value="InterPro"/>
</dbReference>
<dbReference type="InterPro" id="IPR000052">
    <property type="entry name" value="Pltvir_coat"/>
</dbReference>
<dbReference type="Pfam" id="PF00286">
    <property type="entry name" value="Flexi_CP"/>
    <property type="match status" value="1"/>
</dbReference>
<dbReference type="PRINTS" id="PR00232">
    <property type="entry name" value="POTXCARLCOAT"/>
</dbReference>
<dbReference type="PROSITE" id="PS00418">
    <property type="entry name" value="POTEX_CARLAVIRUS_COAT"/>
    <property type="match status" value="1"/>
</dbReference>